<accession>Q306W6</accession>
<protein>
    <recommendedName>
        <fullName>Polyprotein P1234</fullName>
        <shortName>P1234</shortName>
    </recommendedName>
    <alternativeName>
        <fullName>Non-structural polyprotein</fullName>
    </alternativeName>
    <component>
        <recommendedName>
            <fullName>Polyprotein P123'</fullName>
            <shortName>P123'</shortName>
        </recommendedName>
    </component>
    <component>
        <recommendedName>
            <fullName>Polyprotein P123</fullName>
            <shortName>P123</shortName>
        </recommendedName>
    </component>
    <component>
        <recommendedName>
            <fullName>mRNA-capping enzyme nsP1</fullName>
            <ecNumber evidence="5">2.1.1.-</ecNumber>
            <ecNumber evidence="5">2.7.7.-</ecNumber>
        </recommendedName>
        <alternativeName>
            <fullName>Non-structural protein 1</fullName>
        </alternativeName>
    </component>
    <component>
        <recommendedName>
            <fullName>Protease nsP2</fullName>
            <ecNumber evidence="4">3.4.22.-</ecNumber>
            <ecNumber evidence="7">3.6.1.15</ecNumber>
            <ecNumber evidence="3">3.6.1.74</ecNumber>
            <ecNumber evidence="7">3.6.4.13</ecNumber>
        </recommendedName>
        <alternativeName>
            <fullName>Non-structural protein 2</fullName>
            <shortName>nsP2</shortName>
        </alternativeName>
    </component>
    <component>
        <recommendedName>
            <fullName>Non-structural protein 3'</fullName>
            <shortName>nsP3'</shortName>
            <ecNumber evidence="4">3.1.3.84</ecNumber>
        </recommendedName>
    </component>
    <component>
        <recommendedName>
            <fullName>Non-structural protein 3</fullName>
            <shortName>nsP3</shortName>
            <ecNumber evidence="4">3.1.3.84</ecNumber>
        </recommendedName>
    </component>
    <component>
        <recommendedName>
            <fullName>RNA-directed RNA polymerase nsP4</fullName>
            <ecNumber evidence="2">2.7.7.19</ecNumber>
            <ecNumber evidence="9">2.7.7.48</ecNumber>
        </recommendedName>
        <alternativeName>
            <fullName>Non-structural protein 4</fullName>
            <shortName>nsP4</shortName>
        </alternativeName>
    </component>
</protein>
<feature type="chain" id="PRO_0000308384" description="Polyprotein P1234">
    <location>
        <begin position="1"/>
        <end position="2471"/>
    </location>
</feature>
<feature type="chain" id="PRO_0000228743" description="Polyprotein P123'">
    <location>
        <begin position="1"/>
        <end position="1863"/>
    </location>
</feature>
<feature type="chain" id="PRO_0000228744" description="Polyprotein P123">
    <location>
        <begin position="1"/>
        <end position="1856"/>
    </location>
</feature>
<feature type="chain" id="PRO_0000228745" description="mRNA-capping enzyme nsP1">
    <location>
        <begin position="1"/>
        <end position="533"/>
    </location>
</feature>
<feature type="chain" id="PRO_0000228746" description="Protease nsP2">
    <location>
        <begin position="534"/>
        <end position="1327"/>
    </location>
</feature>
<feature type="chain" id="PRO_0000228747" description="Non-structural protein 3'">
    <location>
        <begin position="1328"/>
        <end position="1863"/>
    </location>
</feature>
<feature type="chain" id="PRO_0000228748" description="Non-structural protein 3">
    <location>
        <begin position="1328"/>
        <end position="1856"/>
    </location>
</feature>
<feature type="chain" id="PRO_0000228749" description="RNA-directed RNA polymerase nsP4">
    <location>
        <begin position="1864"/>
        <end position="2471"/>
    </location>
</feature>
<feature type="domain" description="Alphavirus-like MT" evidence="12">
    <location>
        <begin position="28"/>
        <end position="257"/>
    </location>
</feature>
<feature type="domain" description="(+)RNA virus helicase ATP-binding" evidence="11">
    <location>
        <begin position="688"/>
        <end position="839"/>
    </location>
</feature>
<feature type="domain" description="(+)RNA virus helicase C-terminal" evidence="11">
    <location>
        <begin position="840"/>
        <end position="988"/>
    </location>
</feature>
<feature type="domain" description="Peptidase C9" evidence="10">
    <location>
        <begin position="1001"/>
        <end position="1320"/>
    </location>
</feature>
<feature type="domain" description="Macro" evidence="8">
    <location>
        <begin position="1328"/>
        <end position="1486"/>
    </location>
</feature>
<feature type="domain" description="RdRp catalytic" evidence="9">
    <location>
        <begin position="2228"/>
        <end position="2343"/>
    </location>
</feature>
<feature type="region of interest" description="NsP1 membrane-binding" evidence="3">
    <location>
        <begin position="242"/>
        <end position="261"/>
    </location>
</feature>
<feature type="region of interest" description="Nucleolus localization signal" evidence="3">
    <location>
        <begin position="1002"/>
        <end position="1021"/>
    </location>
</feature>
<feature type="region of interest" description="Disordered" evidence="13">
    <location>
        <begin position="1669"/>
        <end position="1692"/>
    </location>
</feature>
<feature type="region of interest" description="Binding to host G3BP family members" evidence="6">
    <location>
        <begin position="1771"/>
        <end position="1783"/>
    </location>
</feature>
<feature type="region of interest" description="Disordered" evidence="13">
    <location>
        <begin position="1798"/>
        <end position="1838"/>
    </location>
</feature>
<feature type="region of interest" description="Binding to host FXR family members" evidence="6">
    <location>
        <begin position="1835"/>
        <end position="1851"/>
    </location>
</feature>
<feature type="short sequence motif" description="Nuclear export signal" evidence="4">
    <location>
        <begin position="1054"/>
        <end position="1063"/>
    </location>
</feature>
<feature type="short sequence motif" description="Nuclear localization signal" evidence="4">
    <location>
        <begin position="1177"/>
        <end position="1181"/>
    </location>
</feature>
<feature type="compositionally biased region" description="Pro residues" evidence="13">
    <location>
        <begin position="1670"/>
        <end position="1681"/>
    </location>
</feature>
<feature type="compositionally biased region" description="Basic and acidic residues" evidence="13">
    <location>
        <begin position="1805"/>
        <end position="1822"/>
    </location>
</feature>
<feature type="compositionally biased region" description="Basic residues" evidence="13">
    <location>
        <begin position="1823"/>
        <end position="1834"/>
    </location>
</feature>
<feature type="active site" description="For cysteine protease nsP2 activity" evidence="10">
    <location>
        <position position="1010"/>
    </location>
</feature>
<feature type="active site" description="For cysteine protease nsP2 activity" evidence="10">
    <location>
        <position position="1079"/>
    </location>
</feature>
<feature type="binding site" evidence="11">
    <location>
        <begin position="719"/>
        <end position="726"/>
    </location>
    <ligand>
        <name>a ribonucleoside 5'-triphosphate</name>
        <dbReference type="ChEBI" id="CHEBI:61557"/>
    </ligand>
</feature>
<feature type="binding site" evidence="5">
    <location>
        <position position="1337"/>
    </location>
    <ligand>
        <name>ADP-D-ribose</name>
        <dbReference type="ChEBI" id="CHEBI:57967"/>
    </ligand>
</feature>
<feature type="binding site" evidence="7">
    <location>
        <position position="1351"/>
    </location>
    <ligand>
        <name>ADP-D-ribose</name>
        <dbReference type="ChEBI" id="CHEBI:57967"/>
    </ligand>
</feature>
<feature type="binding site" evidence="7">
    <location>
        <position position="1359"/>
    </location>
    <ligand>
        <name>ADP-D-ribose</name>
        <dbReference type="ChEBI" id="CHEBI:57967"/>
    </ligand>
</feature>
<feature type="binding site" evidence="5">
    <location>
        <position position="1438"/>
    </location>
    <ligand>
        <name>ADP-D-ribose</name>
        <dbReference type="ChEBI" id="CHEBI:57967"/>
    </ligand>
</feature>
<feature type="binding site" evidence="7">
    <location>
        <position position="1439"/>
    </location>
    <ligand>
        <name>ADP-D-ribose</name>
        <dbReference type="ChEBI" id="CHEBI:57967"/>
    </ligand>
</feature>
<feature type="binding site" evidence="7">
    <location>
        <position position="1440"/>
    </location>
    <ligand>
        <name>ADP-D-ribose</name>
        <dbReference type="ChEBI" id="CHEBI:57967"/>
    </ligand>
</feature>
<feature type="binding site" evidence="2">
    <location>
        <position position="1589"/>
    </location>
    <ligand>
        <name>Zn(2+)</name>
        <dbReference type="ChEBI" id="CHEBI:29105"/>
    </ligand>
</feature>
<feature type="binding site" evidence="2">
    <location>
        <position position="1591"/>
    </location>
    <ligand>
        <name>Zn(2+)</name>
        <dbReference type="ChEBI" id="CHEBI:29105"/>
    </ligand>
</feature>
<feature type="binding site" evidence="2">
    <location>
        <position position="1614"/>
    </location>
    <ligand>
        <name>Zn(2+)</name>
        <dbReference type="ChEBI" id="CHEBI:29105"/>
    </ligand>
</feature>
<feature type="binding site" evidence="2">
    <location>
        <position position="1632"/>
    </location>
    <ligand>
        <name>Zn(2+)</name>
        <dbReference type="ChEBI" id="CHEBI:29105"/>
    </ligand>
</feature>
<feature type="site" description="Involved in the phosphoramide link with 7-methyl-GMP" evidence="4">
    <location>
        <position position="37"/>
    </location>
</feature>
<feature type="site" description="Cleavage; by protease nsP2" evidence="2">
    <location>
        <begin position="533"/>
        <end position="534"/>
    </location>
</feature>
<feature type="site" description="Cleavage; by protease nsP2" evidence="2">
    <location>
        <begin position="1327"/>
        <end position="1328"/>
    </location>
</feature>
<feature type="site" description="Cleavage; by protease nsP2" evidence="7">
    <location>
        <begin position="1863"/>
        <end position="1864"/>
    </location>
</feature>
<feature type="lipid moiety-binding region" description="S-palmitoyl cysteine; by host" evidence="7">
    <location>
        <position position="417"/>
    </location>
</feature>
<reference key="1">
    <citation type="submission" date="2005-10" db="EMBL/GenBank/DDBJ databases">
        <title>Eastern equine encephalomyelitis virus strain.</title>
        <authorList>
            <person name="Kondig J.P."/>
            <person name="Turell M.J."/>
            <person name="Lee J.S."/>
            <person name="O'Guinn M.L."/>
            <person name="Wasieloski L.P. Jr."/>
        </authorList>
    </citation>
    <scope>NUCLEOTIDE SEQUENCE [GENOMIC RNA]</scope>
</reference>
<organism>
    <name type="scientific">Eastern equine encephalitis virus (strain PE-0.0155)</name>
    <name type="common">EEEV</name>
    <name type="synonym">Eastern equine encephalomyelitis virus</name>
    <dbReference type="NCBI Taxonomy" id="374596"/>
    <lineage>
        <taxon>Viruses</taxon>
        <taxon>Riboviria</taxon>
        <taxon>Orthornavirae</taxon>
        <taxon>Kitrinoviricota</taxon>
        <taxon>Alsuviricetes</taxon>
        <taxon>Martellivirales</taxon>
        <taxon>Togaviridae</taxon>
        <taxon>Alphavirus</taxon>
        <taxon>Eastern equine encephalitis virus</taxon>
    </lineage>
</organism>
<comment type="function">
    <molecule>Polyprotein P1234</molecule>
    <text evidence="7">Inactive precursor of the viral replicase, which is activated by cleavages carried out by the viral protease nsP2.</text>
</comment>
<comment type="function">
    <molecule>Polyprotein P123</molecule>
    <text evidence="2 14">The early replication complex formed by the polyprotein P123 and nsP4 synthesizes the minus-strand RNAs (antigenome) (By similarity). Polyprotein P123 is a short-lived polyprotein that accumulates during early stage of infection (Probable). As soon P123 is cleaved into mature proteins, the plus-strand RNAs synthesis begins (By similarity).</text>
</comment>
<comment type="function">
    <molecule>Polyprotein P123'</molecule>
    <text evidence="14">The early replication complex formed by the polyprotein P123' and nsP4 synthesizes minus-strand RNAs (antigenome) (Probable). Polyprotein P123' is a short-lived polyprotein that accumulates during early stage of infection (Probable). As soon P123' is cleaved into mature proteins, the plus-strand RNAs synthesis begins (Probable).</text>
</comment>
<comment type="function">
    <molecule>mRNA-capping enzyme nsP1</molecule>
    <text evidence="2 3 4 7 14">Cytoplasmic capping enzyme that catalyzes two virus-specific reactions: methyltransferase and nsP1 guanylyltransferase (By similarity). mRNA-capping is necessary since all viral RNAs are synthesized in the cytoplasm, and host capping enzymes are restricted to the nucleus (Probable). The enzymatic reaction involves a covalent link between 7-methyl-GMP and nsP1, whereas eukaryotic capping enzymes form a covalent complex only with GMP (Probable). NsP1 capping consists in the following reactions: GTP is first methylated into 7-methyl-GMP and then is covalently linked to nsP1 to form the m7GMp-nsP1 complex from which 7-methyl-GMP complex is transferred to the mRNA to create the cap structure (By similarity). NsP1 is also needed for the initiation of the minus-strand RNAs synthesis (By similarity). Probably serves as a membrane anchor for the replication complex composed of nsP1-nsP4 (By similarity). Nsp1 is needed for the initiation of the minus-strand RNAs synthesis (By similarity). Palmitoylated nsP1 is remodeling host cell cytoskeleton, and induces filopodium-like structure formation at the surface of the host cell (By similarity).</text>
</comment>
<comment type="function">
    <molecule>Protease nsP2</molecule>
    <text evidence="2 3 4 7">Multifunctional protein whose N-terminus is part of the RNA polymerase complex and displays NTPase, RNA triphosphatase and helicase activities (By similarity). NTPase and RNA triphosphatase are involved in viral RNA capping and helicase keeps a check on the dsRNA replication intermediates (By similarity). The C-terminus harbors a protease that specifically cleaves the polyproteins and releases the mature proteins (By similarity). Required for the shutoff of minus-strand RNAs synthesis (By similarity). Inhibits host translation to ensure maximal viral gene expression and evade host immune response (By similarity).</text>
</comment>
<comment type="function">
    <molecule>Non-structural protein 3</molecule>
    <text evidence="2 4 6">Seems to be essential for minus-strand RNAs and subgenomic 26S mRNAs synthesis (By similarity). Displays mono-ADP-ribosylhydrolase activity (By similarity). ADP-ribosylation is a post-translational modification that controls various processes of the host cell and the virus probably needs to revert it for optimal viral replication (By similarity). Binds proteins of FXR and G3BP families and sequesters them into the viral RNA replication complexes thereby inhibiting the formation of host stress granules on viral mRNAs (By similarity). The nsp3-FXR and nsp3-G3BP complexes bind viral RNAs and probably orchestrate the assembly of viral replication complexes, thanks to the ability of G3BP and FXR family members to self-assemble and bind DNA (By similarity).</text>
</comment>
<comment type="function">
    <molecule>Non-structural protein 3'</molecule>
    <text evidence="2 14">Seems to be essential for minus-strand RNAs and subgenomic 26S mRNAs synthesis (By similarity). Displays mono-ADP-ribosylhydrolase activity (Probable). ADP-ribosylation is a post-translational modification that controls various processes of the host cell and the virus probably needs to revert it for optimal viral replication (Probable). Binds proteins of FXR and G3BP families and sequesters them into the viral RNA replication complexes thereby inhibiting the formation of host stress granules on viral mRNAs (Probable). The nsp3'-FXR and nsp3-G3BP complexes bind viral RNAs and probably orchestrate the assembly of viral replication complexes, thanks to the ability of G3BP and FXR family members to self-assemble and bind DNA (Probable).</text>
</comment>
<comment type="function">
    <molecule>RNA-directed RNA polymerase nsP4</molecule>
    <text evidence="2">RNA dependent RNA polymerase (By similarity). Replicates genomic and antigenomic RNA by recognizing replications specific signals. The early replication complex formed by the polyprotein P123 and nsP4 synthesizes minus-strand RNAs (By similarity). The late replication complex composed of fully processed nsP1-nsP4 is responsible for the production of genomic and subgenomic plus-strand RNAs (By similarity).</text>
</comment>
<comment type="catalytic activity">
    <reaction evidence="4">
        <text>GTP + S-adenosyl-L-methionine = N(7)-methyl-GTP + S-adenosyl-L-homocysteine</text>
        <dbReference type="Rhea" id="RHEA:46948"/>
        <dbReference type="ChEBI" id="CHEBI:37565"/>
        <dbReference type="ChEBI" id="CHEBI:57856"/>
        <dbReference type="ChEBI" id="CHEBI:59789"/>
        <dbReference type="ChEBI" id="CHEBI:87133"/>
    </reaction>
</comment>
<comment type="catalytic activity">
    <reaction evidence="4">
        <text>N(7)-methyl-GTP + L-histidyl-[protein] = N(tele)-(N(7)-methylguanosine 5'-phospho)-L-histidyl-[protein] + diphosphate</text>
        <dbReference type="Rhea" id="RHEA:54792"/>
        <dbReference type="Rhea" id="RHEA-COMP:9745"/>
        <dbReference type="Rhea" id="RHEA-COMP:13995"/>
        <dbReference type="ChEBI" id="CHEBI:29979"/>
        <dbReference type="ChEBI" id="CHEBI:33019"/>
        <dbReference type="ChEBI" id="CHEBI:87133"/>
        <dbReference type="ChEBI" id="CHEBI:138334"/>
    </reaction>
    <physiologicalReaction direction="left-to-right" evidence="4">
        <dbReference type="Rhea" id="RHEA:54793"/>
    </physiologicalReaction>
</comment>
<comment type="catalytic activity">
    <reaction evidence="4">
        <text>N(tele)-(N(7)-methylguanosine 5'-phospho)-L-histidyl-[protein] + a 5'-end diphospho-(purine-ribonucleoside) in mRNA + H(+) = a 5'-end (N(7)-methyl 5'-triphosphoguanosine)-(purine-ribonucleoside) in mRNA + L-histidyl-[protein]</text>
        <dbReference type="Rhea" id="RHEA:54800"/>
        <dbReference type="Rhea" id="RHEA-COMP:9745"/>
        <dbReference type="Rhea" id="RHEA-COMP:12925"/>
        <dbReference type="Rhea" id="RHEA-COMP:13929"/>
        <dbReference type="Rhea" id="RHEA-COMP:13995"/>
        <dbReference type="ChEBI" id="CHEBI:15378"/>
        <dbReference type="ChEBI" id="CHEBI:29979"/>
        <dbReference type="ChEBI" id="CHEBI:133968"/>
        <dbReference type="ChEBI" id="CHEBI:138276"/>
        <dbReference type="ChEBI" id="CHEBI:138334"/>
    </reaction>
</comment>
<comment type="catalytic activity">
    <reaction evidence="3">
        <text>a 5'-end triphospho-ribonucleoside in mRNA + H2O = a 5'-end diphospho-ribonucleoside in mRNA + phosphate + H(+)</text>
        <dbReference type="Rhea" id="RHEA:67004"/>
        <dbReference type="Rhea" id="RHEA-COMP:17164"/>
        <dbReference type="Rhea" id="RHEA-COMP:17165"/>
        <dbReference type="ChEBI" id="CHEBI:15377"/>
        <dbReference type="ChEBI" id="CHEBI:15378"/>
        <dbReference type="ChEBI" id="CHEBI:43474"/>
        <dbReference type="ChEBI" id="CHEBI:167616"/>
        <dbReference type="ChEBI" id="CHEBI:167618"/>
        <dbReference type="EC" id="3.6.1.74"/>
    </reaction>
    <physiologicalReaction direction="left-to-right" evidence="3">
        <dbReference type="Rhea" id="RHEA:67005"/>
    </physiologicalReaction>
</comment>
<comment type="catalytic activity">
    <reaction evidence="7">
        <text>a ribonucleoside 5'-triphosphate + H2O = a ribonucleoside 5'-diphosphate + phosphate + H(+)</text>
        <dbReference type="Rhea" id="RHEA:23680"/>
        <dbReference type="ChEBI" id="CHEBI:15377"/>
        <dbReference type="ChEBI" id="CHEBI:15378"/>
        <dbReference type="ChEBI" id="CHEBI:43474"/>
        <dbReference type="ChEBI" id="CHEBI:57930"/>
        <dbReference type="ChEBI" id="CHEBI:61557"/>
        <dbReference type="EC" id="3.6.1.15"/>
    </reaction>
</comment>
<comment type="catalytic activity">
    <reaction evidence="7">
        <text>ATP + H2O = ADP + phosphate + H(+)</text>
        <dbReference type="Rhea" id="RHEA:13065"/>
        <dbReference type="ChEBI" id="CHEBI:15377"/>
        <dbReference type="ChEBI" id="CHEBI:15378"/>
        <dbReference type="ChEBI" id="CHEBI:30616"/>
        <dbReference type="ChEBI" id="CHEBI:43474"/>
        <dbReference type="ChEBI" id="CHEBI:456216"/>
        <dbReference type="EC" id="3.6.4.13"/>
    </reaction>
</comment>
<comment type="catalytic activity">
    <reaction evidence="9">
        <text>RNA(n) + a ribonucleoside 5'-triphosphate = RNA(n+1) + diphosphate</text>
        <dbReference type="Rhea" id="RHEA:21248"/>
        <dbReference type="Rhea" id="RHEA-COMP:14527"/>
        <dbReference type="Rhea" id="RHEA-COMP:17342"/>
        <dbReference type="ChEBI" id="CHEBI:33019"/>
        <dbReference type="ChEBI" id="CHEBI:61557"/>
        <dbReference type="ChEBI" id="CHEBI:140395"/>
        <dbReference type="EC" id="2.7.7.48"/>
    </reaction>
</comment>
<comment type="catalytic activity">
    <reaction evidence="4">
        <text>4-O-(ADP-D-ribosyl)-L-aspartyl-[protein] + H2O = L-aspartyl-[protein] + ADP-D-ribose + H(+)</text>
        <dbReference type="Rhea" id="RHEA:54428"/>
        <dbReference type="Rhea" id="RHEA-COMP:9867"/>
        <dbReference type="Rhea" id="RHEA-COMP:13832"/>
        <dbReference type="ChEBI" id="CHEBI:15377"/>
        <dbReference type="ChEBI" id="CHEBI:15378"/>
        <dbReference type="ChEBI" id="CHEBI:29961"/>
        <dbReference type="ChEBI" id="CHEBI:57967"/>
        <dbReference type="ChEBI" id="CHEBI:138102"/>
    </reaction>
    <physiologicalReaction direction="left-to-right" evidence="4">
        <dbReference type="Rhea" id="RHEA:54429"/>
    </physiologicalReaction>
</comment>
<comment type="catalytic activity">
    <reaction evidence="4">
        <text>5-O-(ADP-D-ribosyl)-L-glutamyl-[protein] + H2O = L-glutamyl-[protein] + ADP-D-ribose + H(+)</text>
        <dbReference type="Rhea" id="RHEA:58248"/>
        <dbReference type="Rhea" id="RHEA-COMP:10208"/>
        <dbReference type="Rhea" id="RHEA-COMP:15089"/>
        <dbReference type="ChEBI" id="CHEBI:15377"/>
        <dbReference type="ChEBI" id="CHEBI:15378"/>
        <dbReference type="ChEBI" id="CHEBI:29973"/>
        <dbReference type="ChEBI" id="CHEBI:57967"/>
        <dbReference type="ChEBI" id="CHEBI:142540"/>
    </reaction>
    <physiologicalReaction direction="left-to-right" evidence="4">
        <dbReference type="Rhea" id="RHEA:58249"/>
    </physiologicalReaction>
</comment>
<comment type="catalytic activity">
    <reaction evidence="2">
        <text>RNA(n) + ATP = RNA(n)-3'-adenine ribonucleotide + diphosphate</text>
        <dbReference type="Rhea" id="RHEA:11332"/>
        <dbReference type="Rhea" id="RHEA-COMP:14527"/>
        <dbReference type="Rhea" id="RHEA-COMP:17347"/>
        <dbReference type="ChEBI" id="CHEBI:30616"/>
        <dbReference type="ChEBI" id="CHEBI:33019"/>
        <dbReference type="ChEBI" id="CHEBI:140395"/>
        <dbReference type="ChEBI" id="CHEBI:173115"/>
        <dbReference type="EC" id="2.7.7.19"/>
    </reaction>
</comment>
<comment type="catalytic activity">
    <reaction evidence="5">
        <text>ADP-alpha-D-ribose 1''-phosphate + H2O = ADP-D-ribose + phosphate</text>
        <dbReference type="Rhea" id="RHEA:25029"/>
        <dbReference type="ChEBI" id="CHEBI:15377"/>
        <dbReference type="ChEBI" id="CHEBI:43474"/>
        <dbReference type="ChEBI" id="CHEBI:57967"/>
        <dbReference type="ChEBI" id="CHEBI:58753"/>
        <dbReference type="EC" id="3.1.3.84"/>
    </reaction>
    <physiologicalReaction direction="left-to-right" evidence="5">
        <dbReference type="Rhea" id="RHEA:25030"/>
    </physiologicalReaction>
</comment>
<comment type="cofactor">
    <cofactor evidence="2">
        <name>Mg(2+)</name>
        <dbReference type="ChEBI" id="CHEBI:18420"/>
    </cofactor>
    <cofactor evidence="2">
        <name>Mn(2+)</name>
        <dbReference type="ChEBI" id="CHEBI:29035"/>
    </cofactor>
    <text evidence="2">For nsP4 adenylyltransferase activity; Mn(2+) supports catalysis at 60% of the levels observed with Mg(2+).</text>
</comment>
<comment type="cofactor">
    <cofactor evidence="2">
        <name>Mg(2+)</name>
        <dbReference type="ChEBI" id="CHEBI:18420"/>
    </cofactor>
    <text evidence="2">For nsP4 RNA-directed RNA polymerase activity.</text>
</comment>
<comment type="cofactor">
    <cofactor evidence="4">
        <name>Mg(2+)</name>
        <dbReference type="ChEBI" id="CHEBI:18420"/>
    </cofactor>
    <text evidence="4">For nsP1 guanylylation.</text>
</comment>
<comment type="cofactor">
    <cofactor>
        <name>Mg(2+)</name>
        <dbReference type="ChEBI" id="CHEBI:18420"/>
    </cofactor>
    <text evidence="7">For nsP2 RNA triphosphatase activity.</text>
</comment>
<comment type="cofactor">
    <cofactor>
        <name>Mg(2+)</name>
        <dbReference type="ChEBI" id="CHEBI:18420"/>
    </cofactor>
    <text evidence="7">For nsP2 NTPase activity.</text>
</comment>
<comment type="activity regulation">
    <molecule>mRNA-capping enzyme nsP1</molecule>
    <text evidence="4">Inhibited by sinefungin.</text>
</comment>
<comment type="subunit">
    <molecule>mRNA-capping enzyme nsP1</molecule>
    <text evidence="4 6 7">Interacts with non-structural protein 3 (By similarity). Interacts with RNA-directed RNA polymerase nsP4 (By similarity). Interacts with protease nsP2 (By similarity). interacts with itself (By similarity).</text>
</comment>
<comment type="subunit">
    <molecule>Non-structural protein 3</molecule>
    <text evidence="4 6 7">Interacts with mRNA-capping enzyme nsP1 (By similarity). Interacts with host DDX1 (By similarity). Interacts with host DDX3 (By similarity). Interacts (via C-terminus) with host FXR1; this interaction inhibits the formation of host stress granules on viral mRNAs and the nsp3-FXR1 complexes bind viral RNAs and probably orchestrate the assembly of viral replication complexes (By similarity). Interacts (via C-terminus) with host FXR2; this interaction inhibits the formation of host stress granules on viral mRNAs and the nsp3-FXR2 complexes bind viral RNAs and probably orchestrate the assembly of viral replication complexes (By similarity). Interacts (via C-terminus) with host FMR1; this interaction inhibits the formation of host stress granules on viral mRNAs and the nsp3-FMR1 complexes bind viral RNAs and probably orchestrate the assembly of viral replication complexes (By similarity). Interacts (via C-terminus) with host G3BP1; this interaction inhibits the formation of host stress granules on viral mRNAs and the nsp3-G3BP1 complexes bind viral RNAs and probably orchestrate the assembly of viral replication complexes (By similarity). Interacts (via C-terminus) with host G3BP2; this interaction inhibits the formation of host stress granules on viral mRNAs and the nsp3-G3BP2 complexes bind viral RNAs and probably orchestrate the assembly of viral replication complexes (By similarity).</text>
</comment>
<comment type="subunit">
    <molecule>RNA-directed RNA polymerase nsP4</molecule>
    <text evidence="4 6 7">Interacts with mRNA-capping enzyme nsP1 (By similarity). Interacts with protease nsP2 (By similarity). interacts with itself (By similarity).</text>
</comment>
<comment type="subunit">
    <molecule>Protease nsP2</molecule>
    <text evidence="4 6 7">Interacts with RNA-directed RNA polymerase nsP4 (By similarity). Interacts with mRNA-capping enzyme nsP1 (By similarity). Interacts with KPNA1/karyopherin-alpha1; this interaction probably allows the active transport of protease nsP2 into the host nucleus (By similarity).</text>
</comment>
<comment type="interaction">
    <interactant intactId="EBI-38815211">
        <id>Q306W6</id>
    </interactant>
    <interactant intactId="EBI-354967">
        <id>Q00610</id>
        <label>CLTC</label>
    </interactant>
    <organismsDiffer>true</organismsDiffer>
    <experiments>4</experiments>
</comment>
<comment type="subcellular location">
    <molecule>Polyprotein P1234</molecule>
    <subcellularLocation>
        <location evidence="14">Host cytoplasmic vesicle membrane</location>
        <topology evidence="14">Peripheral membrane protein</topology>
    </subcellularLocation>
    <text evidence="14">Part of cytoplasmic vesicles, which are probably formed at the plasma membrane and internalized leading to late endosomal/lysosomal spherules containing the replication complex.</text>
</comment>
<comment type="subcellular location">
    <molecule>Polyprotein P123'</molecule>
    <subcellularLocation>
        <location evidence="14">Host cytoplasmic vesicle membrane</location>
        <topology evidence="14">Peripheral membrane protein</topology>
    </subcellularLocation>
    <text evidence="14">Part of cytoplasmic vesicles, which are probably formed at the plasma membrane and internalized leading to late endosomal/lysosomal spherules containing the replication complex.</text>
</comment>
<comment type="subcellular location">
    <molecule>Polyprotein P123</molecule>
    <subcellularLocation>
        <location evidence="14">Host cytoplasmic vesicle membrane</location>
        <topology evidence="14">Peripheral membrane protein</topology>
    </subcellularLocation>
    <text evidence="14">Part of cytoplasmic vesicles, which are probably formed at the plasma membrane and internalized leading to late endosomal/lysosomal spherules containing the replication complex.</text>
</comment>
<comment type="subcellular location">
    <molecule>mRNA-capping enzyme nsP1</molecule>
    <subcellularLocation>
        <location evidence="3">Host cytoplasmic vesicle membrane</location>
        <topology evidence="3">Lipid-anchor</topology>
    </subcellularLocation>
    <subcellularLocation>
        <location evidence="3">Host cell membrane</location>
        <topology evidence="3">Lipid-anchor</topology>
        <orientation evidence="3">Cytoplasmic side</orientation>
    </subcellularLocation>
    <subcellularLocation>
        <location evidence="3">Host cell projection</location>
        <location evidence="3">Host filopodium</location>
    </subcellularLocation>
    <text evidence="3">In the late phase of infection, the polyprotein is quickly cleaved before localization to cellular membranes. Then a fraction of nsP1 localizes to the inner surface of the plasma membrane and its filopodial extensions. Only the palmitoylated nsP1 localizes to the host filopodia (By similarity). NsP1 is also part of cytoplasmic vesicles, which are probably formed at the plasma membrane and internalized leading to late endosomal/lysosomal spherules containing the replication complex (By similarity).</text>
</comment>
<comment type="subcellular location">
    <molecule>Protease nsP2</molecule>
    <subcellularLocation>
        <location evidence="3">Host cytoplasmic vesicle membrane</location>
        <topology evidence="3">Peripheral membrane protein</topology>
    </subcellularLocation>
    <subcellularLocation>
        <location evidence="4">Host nucleus</location>
    </subcellularLocation>
    <subcellularLocation>
        <location evidence="4">Host cytoplasm</location>
    </subcellularLocation>
    <text evidence="3 4">In the late phase of infection, the polyprotein is quickly cleaved before localization to cellular membranes. Then approximately half of nsP2 is found in the nucleus (By similarity). Shuttles between cytoplasm and nucleus (By similarity). NsP2 is also part of cytoplasmic vesicles, which are probably formed at the plasma membrane and internalized leading to late endosomal/lysosomal spherules containing the replication complex (By similarity).</text>
</comment>
<comment type="subcellular location">
    <molecule>Non-structural protein 3</molecule>
    <subcellularLocation>
        <location evidence="2">Host cytoplasmic vesicle membrane</location>
        <topology evidence="14">Peripheral membrane protein</topology>
    </subcellularLocation>
    <text evidence="2">In the late phase of infection, the polyprotein is quickly cleaved before localization to cellular membranes. Then nsP3 and nsP3' form aggregates in cytoplasm (By similarity). NsP3 is also part of cytoplasmic vesicles, which are probably formed at the plasma membrane and internalized leading to late endosomal/lysosomal spherules containing the replication complex (By similarity).</text>
</comment>
<comment type="subcellular location">
    <molecule>Non-structural protein 3'</molecule>
    <subcellularLocation>
        <location evidence="14">Host cytoplasmic vesicle membrane</location>
        <topology evidence="14">Peripheral membrane protein</topology>
    </subcellularLocation>
    <text evidence="2 14">In the late phase of infection, the polyprotein is quickly cleaved before localization to cellular membranes. Then nsP3 and nsP3' form aggregates in cytoplasm (By similarity). NsP3' is also part of cytoplasmic vesicles, which are probably formed at the plasma membrane and internalized leading to late endosomal/lysosomal spherules containing the replication complex (Probable).</text>
</comment>
<comment type="subcellular location">
    <molecule>RNA-directed RNA polymerase nsP4</molecule>
    <subcellularLocation>
        <location>Host cytoplasmic vesicle membrane</location>
        <topology evidence="3">Peripheral membrane protein</topology>
    </subcellularLocation>
    <text evidence="3">NsP4 is part of cytoplasmic vesicles, which are probably formed at the plasma membrane and internalized leading to late endosomal/lysosomal spherules containing the replication complex.</text>
</comment>
<comment type="domain">
    <molecule>Protease nsP2</molecule>
    <text evidence="4 7">The N-terminus exhibits NTPase and RNA triphosphatase activities and is proposed to have helicase activity, whereas the C-terminus possesses protease activity (By similarity). Contains a nuclear localization signal and a nuclear export signal, these two motifs are probably involved in the shuttling between the cytoplasm and the nucleus of nsP2 (By similarity).</text>
</comment>
<comment type="domain">
    <molecule>Non-structural protein 3</molecule>
    <text evidence="2 4 6">In the N-terminus, the macro domain displays a mono-ADP-ribosylhydrolase activity (By similarity). The central part has a zinc-binding function (By similarity). The C-terminus contains two regions responsible for the formation of the nsP3/FXR and nsp3/G3BP complexes (By similarity).</text>
</comment>
<comment type="domain">
    <molecule>Non-structural protein 3'</molecule>
    <text evidence="2 4 6">In the N-terminus, the macro domain displays a mono-ADP-ribosylhydrolase activity (By similarity). The central part has a zinc-binding function (By similarity). The C-terminus contains two regions responsible for the formation of the nsP3'/FXR and nsp3'/G3BP complexes (By similarity).</text>
</comment>
<comment type="PTM">
    <molecule>Polyprotein P1234</molecule>
    <text evidence="2">Specific enzymatic cleavages in vivo yield mature proteins (By similarity). The processing of the polyprotein is temporally regulated (By similarity). In early stages (1.7 hpi), P1234 is first cleaved in trans through its nsP2 protease activity, releasing P123' and nsP4, which associate to form the early replication complex (By similarity). At the same time, P1234 is also cut at the nsP1/nsP2 site early in infection but with lower efficiency (By similarity). After replication of the viral minus-strand RNAs (4 hpi), the polyproteins are cut at the nsP1/nsP2 and nsP2/nsP3 sites very efficiently, preventing accumulation of P123' and P1234 and allowing the formation of the late replication complex (By similarity). NsP3'/nsP4 site is not cleaved anymore and P34 is produced rather than nsP4 (By similarity).</text>
</comment>
<comment type="PTM">
    <molecule>Polyprotein P123</molecule>
    <text evidence="2">Specific enzymatic cleavages in vivo yield mature proteins (By similarity). The processing of the polyprotein is temporally regulated (By similarity). In early stages (1.7 hpi), P123 is cleaved at the nsP1/nsP2 site with low efficiency (By similarity). After replication of the viral minus-strand RNAs (4 hpi), the polyproteins are cut at the nsP1/nsP2 and nsP2/nsP3 sites very efficiently, preventing accumulation of P123 and allowing the formation of the late replication complex (By similarity).</text>
</comment>
<comment type="PTM">
    <molecule>Polyprotein P123'</molecule>
    <text evidence="2">Specific enzymatic cleavages in vivo yield mature proteins (By similarity). The processing of the polyprotein is temporally regulated (By similarity). In early stages (1.7 hpi), P123' is cleaved at the nsP1/nsP2 site with low efficiency (By similarity). After replication of the viral minus-strand RNAs (4 hpi), the polyproteins are cut at the nsP1/nsP2 and nsP2/nsP3 sites very efficiently, preventing accumulation of P123' and allowing the formation of the late replication complex (By similarity).</text>
</comment>
<comment type="PTM">
    <molecule>mRNA-capping enzyme nsP1</molecule>
    <text evidence="2">Palmitoylated by host palmitoyltransferases ZDHHC2 and ZDHHC19.</text>
</comment>
<comment type="PTM">
    <molecule>Non-structural protein 3</molecule>
    <text evidence="3">Phosphorylated by host on serines and threonines.</text>
</comment>
<comment type="PTM">
    <molecule>Non-structural protein 3'</molecule>
    <text evidence="3">Phosphorylated by host on serines and threonines.</text>
</comment>
<comment type="PTM">
    <molecule>RNA-directed RNA polymerase nsP4</molecule>
    <text evidence="2">Ubiquitinated; targets the protein for rapid degradation via the ubiquitin system (By similarity). Nsp4 is present in extremely low quantities due to low frequency of translation through the amber stop-codon and the degradation by the ubiquitin pathway (By similarity).</text>
</comment>
<comment type="miscellaneous">
    <text evidence="2">Viral replication produces dsRNA in the late phase of infection, resulting in a strong activation of host EIF2AK2/PKR, leading to almost complete phosphorylation of EIF2A (By similarity). This inactivates completely cellular translation initiation, resulting shutoff of host proteins synthesis (By similarity). However, phosphorylation of EIF2A is probably not the only mechanism responsible for the host translation shutoff (By similarity). The viral translation can still occur normally because it relies on a hairpin structure in the coding region of sgRNA and is EIF2A-, EIF2D-, EIF4G- EIF4A-independent (By similarity).</text>
</comment>
<comment type="miscellaneous">
    <text evidence="1 2 14">The genome codes for P123, but readthrough of a terminator codon UGA occurs between the codons for Asn-1856 and Arg-1858 giving rise to P1234 (Probable). P1234 is cleaved quickly by nsP2 into P123' and nsP4 (By similarity). Further processing of p123' gives nsP1, nsP2 and nsP3' which is 6 amino acids longer than nsP3 since the cleavage site is after the readthrough (By similarity). This unusual molecular mechanism ensures that few nsP4 are produced compared to other non-structural proteins (By similarity). Mutant viruses with no alternative termination site grow significantly slower than wild-type virus (By similarity). The opal termination codon is frequently mutated to a sense codon on passage in cell culture (By similarity). The presence of the opal codon may be a requirement for viral maintenance in both vertebrate and invertebrate hosts and a selective advantage may be conferred in cell culture for the sense codon (By similarity).</text>
</comment>
<sequence>MEKVHVDLDADSPYVKSLQKCFPHFEIEATQVTDNDHANARAFSHLATKLIESEVDPDQVILDIGSAPVRHTHSKHKYHCICPMISAEDPDRLHRYADKLRKSDVTDRFIASKAADLLTVMSTPDVETPSLCMHTDSTCRYHGTVAVYQDVYAVHAPTSIYHQALKGVRTIYWIGFDTTPFMYKNMAGAYPTYNTNWADESVLEARNIGLCSSDLHEQRFGKISIMRKKKLQPTNKVVFSVGSTIYTEERILLRSWHLPNVFHLKGKTSFTGRCNTIVSCEGYVVKKITISPGIYGKVDNLASTMHREGFLSCKVTDTLRGERVSFPVCTYVPATLCDQMTGILATDVSVDDAQKLLVGLNQRIVVNGRTQRNTNTMPNYLLPIVAQAFSRWAREYHADLEDEKDLGVRERSLVMGCCWAFKTHKITSIYKKPGTQTTKKVPAVFNSFVVPQLTSYGLDIELRRRIKMLLEEKKKPAPIITEADVAHLKGMQEEAEVVAEAEAIRAALPPLLPEVERETVEADIDLIMQEAGAGSVETPRRHIKVTTYPGEEMIGSYAVLSPQAVLNSEKLACIHPLAEQVLVMTHKGRAGRYKVEPYHGRVIVPSGTAIPIPDFQALSESATIVYNEREFVNRYLHHIAINGGALNTDEEYYKVLRSGEAESEYVFDIDAKKCVKKAEAGPMCLVGDLVDPPFHEFAYESLKTRPAAPHKVPTIGVYGVPGSGKSGIIKSAVTKRDLVVSAKKENCTEIIKDVKRMRGMDVAARTVDSVLLNGVKHPVDTLYIDEAFACHAGTLLALIAIVKPKKVVLCGDPKQCGFFNMMCLKVHFNHEICTEVYHKSISRRCTRTVTAIVSTLFYDKRMRTVNPCSDKIIIDTTSTTKPLKDDIILTCFRGWVKQLQIDYKNHEIMTAAASQGLTRKGVYAVRYKVNENPLYAQTSEHVNVLLTRTEKRIVWKTLAGDPWIKTLTAHYPGEFSATLEEWQAEHDAIMKRVLETPANSDVYQNKVHVCWAKALEPVLATANITLTRSQWETIPAFKDDKAFSPEMALNFLCTRFFGVDIDSGLFSAPTVPLTYTNEHWDNSPGPNRYGLCMRTAKELARRYPCILKAVDTGRVADVRTNTIRDYNPMINVVPLNRRLPHSLVVSHRYTGDGNYSQLLSKLTGKTILVIGTPINVPGKRVETLGPGPQCTYKADLDLGIPSMIGKYDIIFVNVRTPYKHHHYQQCEDHAIHHSMLTRKAVDHLNKGGTCVALGYGTADRATENIISAVARSFRFSRVCQPKCAWENTEVAFVFFGKDNGNHLRDQDQLSVVLNNIYQGSTQYEAGRAPAYRVIRGDISKSTDEVIVNAANNKGQPGAGVCGALYKKWPGAFDKAPIATGTAHLVKHTPNIIHAVGPNFSRMSEVEGNQKLSEVYMDIAKIINKERYNKVSIPLLSTGVYAGGKDRVMQSLNHLFTAMDTTDADVTIYCLDKQWETRIKDAIARKESVEELVEDDKPVDIELVRVHPQSSLVGRPGYSTNEGKVHSYLEGTRFHQTAKDIAEIYAMWPNKQEANEQICLYVLGESMTSIRSKCPVEESEASSPPHTIPCLCNYAMTAERVYRLRMAKNEQFAVCSSFQLPKYRITGVQKIQCNKPVIFSGVVPPAIHPRKFSTVEETQPTTIAERLIPRRPAPPVPVPARIPSPRCSPAVSMQSLGGSSTSEVIISEAEVHDSDSDCSIPPMPFVVEAEVHASQGSQWSIPSASGFEIREPLDDLGSITRTPAISDHSVDLITFDSVTDIFENFKQAPFQFLSDIRPIPAPRRRREPETDIQRFDKSEEKPVPKPRTRTAKYKKPPGVARSISEAELDEFIRRHSNXRYEAGAYIFSSETGQGHLQQKSTRQCKLQHPILERSVHEKFYAPRLDLEREKLLQRKLQLCASEGNRSRYQSRKVENMKAITAERLLQGIGAYLSAEPQPVECYKINYPVPVYSTTRSNRFSSADVAVRVCNLVMQENFPTVASYTITDEYDAYLDMVDGASCCLDTATFCPAKLRSFPKKHSYLKPEIRSAVPSPIQNTLQNVLAAATKRNCNVTQMRELPVLDSAAFNVECFKKYACNDEYWETFKNNPIRLTTENVTQYVTKLKGPKAAALFAKTHNLQPLHEIPMDRFVMDLKRDVKVTPGTKHTEERPKVQVIQAADPLATAYLCGIHRELVRRLNAVLLPNIHTLFDMSAEDFDAIIAEHFQFGDAVLETDIASFDKSEDDAIAMSALMILEDLGVDQALLDLIEAAFGNITSVHLPTGTRFKFGAMMKSGMFLTLFINTVVNIMIASRVLRERLTNSPCAAFIGDDNIVKGVKSDALMAERCATWLNMEVKIIDAVVGVKAPYFCGGFIVVDQITGTACRVADPLKRLFKLGKPLPLDDDQDGDRRRALYDEALRWNRIGITDELVKAVESRYDVLYISLVITALSTLAATVSNFKHIRGNPITLYG</sequence>
<proteinExistence type="evidence at protein level"/>
<keyword id="KW-0002">3D-structure</keyword>
<keyword id="KW-0067">ATP-binding</keyword>
<keyword id="KW-1262">Eukaryotic host gene expression shutoff by virus</keyword>
<keyword id="KW-1191">Eukaryotic host transcription shutoff by virus</keyword>
<keyword id="KW-0342">GTP-binding</keyword>
<keyword id="KW-0347">Helicase</keyword>
<keyword id="KW-1032">Host cell membrane</keyword>
<keyword id="KW-1034">Host cell projection</keyword>
<keyword id="KW-1035">Host cytoplasm</keyword>
<keyword id="KW-1036">Host cytoplasmic vesicle</keyword>
<keyword id="KW-1190">Host gene expression shutoff by virus</keyword>
<keyword id="KW-1043">Host membrane</keyword>
<keyword id="KW-1048">Host nucleus</keyword>
<keyword id="KW-0945">Host-virus interaction</keyword>
<keyword id="KW-0378">Hydrolase</keyword>
<keyword id="KW-1104">Inhibition of host RNA polymerase II by virus</keyword>
<keyword id="KW-0449">Lipoprotein</keyword>
<keyword id="KW-0472">Membrane</keyword>
<keyword id="KW-0479">Metal-binding</keyword>
<keyword id="KW-0489">Methyltransferase</keyword>
<keyword id="KW-0506">mRNA capping</keyword>
<keyword id="KW-0507">mRNA processing</keyword>
<keyword id="KW-0511">Multifunctional enzyme</keyword>
<keyword id="KW-0547">Nucleotide-binding</keyword>
<keyword id="KW-0548">Nucleotidyltransferase</keyword>
<keyword id="KW-0564">Palmitate</keyword>
<keyword id="KW-0597">Phosphoprotein</keyword>
<keyword id="KW-0645">Protease</keyword>
<keyword id="KW-1159">RNA suppression of termination</keyword>
<keyword id="KW-0694">RNA-binding</keyword>
<keyword id="KW-0696">RNA-directed RNA polymerase</keyword>
<keyword id="KW-0949">S-adenosyl-L-methionine</keyword>
<keyword id="KW-0788">Thiol protease</keyword>
<keyword id="KW-0808">Transferase</keyword>
<keyword id="KW-0832">Ubl conjugation</keyword>
<keyword id="KW-0693">Viral RNA replication</keyword>
<keyword id="KW-0862">Zinc</keyword>
<dbReference type="EC" id="2.1.1.-" evidence="5"/>
<dbReference type="EC" id="2.7.7.-" evidence="5"/>
<dbReference type="EC" id="3.4.22.-" evidence="4"/>
<dbReference type="EC" id="3.6.1.15" evidence="7"/>
<dbReference type="EC" id="3.6.1.74" evidence="3"/>
<dbReference type="EC" id="3.6.4.13" evidence="7"/>
<dbReference type="EC" id="3.1.3.84" evidence="4"/>
<dbReference type="EC" id="2.7.7.19" evidence="2"/>
<dbReference type="EC" id="2.7.7.48" evidence="9"/>
<dbReference type="EMBL" id="DQ241304">
    <property type="protein sequence ID" value="ABB45867.1"/>
    <property type="molecule type" value="Genomic_RNA"/>
</dbReference>
<dbReference type="PDB" id="7OJ9">
    <property type="method" value="NMR"/>
    <property type="chains" value="B=1663-1685"/>
</dbReference>
<dbReference type="PDBsum" id="7OJ9"/>
<dbReference type="SMR" id="Q306W6"/>
<dbReference type="IntAct" id="Q306W6">
    <property type="interactions" value="2"/>
</dbReference>
<dbReference type="MEROPS" id="C09.002"/>
<dbReference type="Proteomes" id="UP000008678">
    <property type="component" value="Genome"/>
</dbReference>
<dbReference type="GO" id="GO:0044162">
    <property type="term" value="C:host cell cytoplasmic vesicle membrane"/>
    <property type="evidence" value="ECO:0007669"/>
    <property type="project" value="UniProtKB-SubCell"/>
</dbReference>
<dbReference type="GO" id="GO:0044176">
    <property type="term" value="C:host cell filopodium"/>
    <property type="evidence" value="ECO:0007669"/>
    <property type="project" value="UniProtKB-SubCell"/>
</dbReference>
<dbReference type="GO" id="GO:0042025">
    <property type="term" value="C:host cell nucleus"/>
    <property type="evidence" value="ECO:0007669"/>
    <property type="project" value="UniProtKB-SubCell"/>
</dbReference>
<dbReference type="GO" id="GO:0020002">
    <property type="term" value="C:host cell plasma membrane"/>
    <property type="evidence" value="ECO:0007669"/>
    <property type="project" value="UniProtKB-SubCell"/>
</dbReference>
<dbReference type="GO" id="GO:0016020">
    <property type="term" value="C:membrane"/>
    <property type="evidence" value="ECO:0007669"/>
    <property type="project" value="UniProtKB-KW"/>
</dbReference>
<dbReference type="GO" id="GO:0005524">
    <property type="term" value="F:ATP binding"/>
    <property type="evidence" value="ECO:0007669"/>
    <property type="project" value="UniProtKB-KW"/>
</dbReference>
<dbReference type="GO" id="GO:0016887">
    <property type="term" value="F:ATP hydrolysis activity"/>
    <property type="evidence" value="ECO:0007669"/>
    <property type="project" value="RHEA"/>
</dbReference>
<dbReference type="GO" id="GO:0008234">
    <property type="term" value="F:cysteine-type peptidase activity"/>
    <property type="evidence" value="ECO:0007669"/>
    <property type="project" value="UniProtKB-KW"/>
</dbReference>
<dbReference type="GO" id="GO:0005525">
    <property type="term" value="F:GTP binding"/>
    <property type="evidence" value="ECO:0007669"/>
    <property type="project" value="UniProtKB-KW"/>
</dbReference>
<dbReference type="GO" id="GO:0046872">
    <property type="term" value="F:metal ion binding"/>
    <property type="evidence" value="ECO:0007669"/>
    <property type="project" value="UniProtKB-KW"/>
</dbReference>
<dbReference type="GO" id="GO:0140818">
    <property type="term" value="F:mRNA 5'-triphosphate monophosphatase activity"/>
    <property type="evidence" value="ECO:0007669"/>
    <property type="project" value="RHEA"/>
</dbReference>
<dbReference type="GO" id="GO:0008174">
    <property type="term" value="F:mRNA methyltransferase activity"/>
    <property type="evidence" value="ECO:0007669"/>
    <property type="project" value="InterPro"/>
</dbReference>
<dbReference type="GO" id="GO:1990817">
    <property type="term" value="F:poly(A) RNA polymerase activity"/>
    <property type="evidence" value="ECO:0007669"/>
    <property type="project" value="UniProtKB-EC"/>
</dbReference>
<dbReference type="GO" id="GO:0004651">
    <property type="term" value="F:polynucleotide 5'-phosphatase activity"/>
    <property type="evidence" value="ECO:0007669"/>
    <property type="project" value="UniProtKB-EC"/>
</dbReference>
<dbReference type="GO" id="GO:0003723">
    <property type="term" value="F:RNA binding"/>
    <property type="evidence" value="ECO:0007669"/>
    <property type="project" value="UniProtKB-KW"/>
</dbReference>
<dbReference type="GO" id="GO:0003724">
    <property type="term" value="F:RNA helicase activity"/>
    <property type="evidence" value="ECO:0007669"/>
    <property type="project" value="UniProtKB-EC"/>
</dbReference>
<dbReference type="GO" id="GO:0003968">
    <property type="term" value="F:RNA-directed RNA polymerase activity"/>
    <property type="evidence" value="ECO:0007669"/>
    <property type="project" value="UniProtKB-KW"/>
</dbReference>
<dbReference type="GO" id="GO:0006370">
    <property type="term" value="P:7-methylguanosine mRNA capping"/>
    <property type="evidence" value="ECO:0007669"/>
    <property type="project" value="UniProtKB-KW"/>
</dbReference>
<dbReference type="GO" id="GO:0006351">
    <property type="term" value="P:DNA-templated transcription"/>
    <property type="evidence" value="ECO:0007669"/>
    <property type="project" value="InterPro"/>
</dbReference>
<dbReference type="GO" id="GO:0032259">
    <property type="term" value="P:methylation"/>
    <property type="evidence" value="ECO:0007669"/>
    <property type="project" value="UniProtKB-KW"/>
</dbReference>
<dbReference type="GO" id="GO:0016556">
    <property type="term" value="P:mRNA modification"/>
    <property type="evidence" value="ECO:0007669"/>
    <property type="project" value="InterPro"/>
</dbReference>
<dbReference type="GO" id="GO:0006508">
    <property type="term" value="P:proteolysis"/>
    <property type="evidence" value="ECO:0007669"/>
    <property type="project" value="UniProtKB-KW"/>
</dbReference>
<dbReference type="GO" id="GO:0039657">
    <property type="term" value="P:symbiont-mediated suppression of host gene expression"/>
    <property type="evidence" value="ECO:0007669"/>
    <property type="project" value="UniProtKB-KW"/>
</dbReference>
<dbReference type="GO" id="GO:0039523">
    <property type="term" value="P:symbiont-mediated suppression of host mRNA transcription via inhibition of RNA polymerase II activity"/>
    <property type="evidence" value="ECO:0007669"/>
    <property type="project" value="UniProtKB-KW"/>
</dbReference>
<dbReference type="GO" id="GO:0039694">
    <property type="term" value="P:viral RNA genome replication"/>
    <property type="evidence" value="ECO:0007669"/>
    <property type="project" value="InterPro"/>
</dbReference>
<dbReference type="CDD" id="cd21557">
    <property type="entry name" value="Macro_X_Nsp3-like"/>
    <property type="match status" value="1"/>
</dbReference>
<dbReference type="CDD" id="cd23250">
    <property type="entry name" value="Togaviridae_RdRp"/>
    <property type="match status" value="1"/>
</dbReference>
<dbReference type="FunFam" id="3.40.220.10:FF:000015">
    <property type="entry name" value="Polyprotein P1234"/>
    <property type="match status" value="1"/>
</dbReference>
<dbReference type="FunFam" id="3.40.50.300:FF:001415">
    <property type="entry name" value="Polyprotein P1234"/>
    <property type="match status" value="1"/>
</dbReference>
<dbReference type="Gene3D" id="3.90.70.110">
    <property type="entry name" value="Alphavirus nsP2 protease domain"/>
    <property type="match status" value="1"/>
</dbReference>
<dbReference type="Gene3D" id="3.40.220.10">
    <property type="entry name" value="Leucine Aminopeptidase, subunit E, domain 1"/>
    <property type="match status" value="1"/>
</dbReference>
<dbReference type="Gene3D" id="3.40.50.300">
    <property type="entry name" value="P-loop containing nucleotide triphosphate hydrolases"/>
    <property type="match status" value="2"/>
</dbReference>
<dbReference type="Gene3D" id="3.40.50.150">
    <property type="entry name" value="Vaccinia Virus protein VP39"/>
    <property type="match status" value="1"/>
</dbReference>
<dbReference type="InterPro" id="IPR027351">
    <property type="entry name" value="(+)RNA_virus_helicase_core_dom"/>
</dbReference>
<dbReference type="InterPro" id="IPR002588">
    <property type="entry name" value="Alphavirus-like_MT_dom"/>
</dbReference>
<dbReference type="InterPro" id="IPR002620">
    <property type="entry name" value="Alphavirus_nsp2pro"/>
</dbReference>
<dbReference type="InterPro" id="IPR044936">
    <property type="entry name" value="Alphavirus_nsp2pro_sf"/>
</dbReference>
<dbReference type="InterPro" id="IPR043502">
    <property type="entry name" value="DNA/RNA_pol_sf"/>
</dbReference>
<dbReference type="InterPro" id="IPR002589">
    <property type="entry name" value="Macro_dom"/>
</dbReference>
<dbReference type="InterPro" id="IPR043472">
    <property type="entry name" value="Macro_dom-like"/>
</dbReference>
<dbReference type="InterPro" id="IPR044371">
    <property type="entry name" value="Macro_X_NSP3-like"/>
</dbReference>
<dbReference type="InterPro" id="IPR048891">
    <property type="entry name" value="nsP3_ZBD"/>
</dbReference>
<dbReference type="InterPro" id="IPR027417">
    <property type="entry name" value="P-loop_NTPase"/>
</dbReference>
<dbReference type="InterPro" id="IPR001788">
    <property type="entry name" value="RNA-dep_RNA_pol_alsuvir"/>
</dbReference>
<dbReference type="InterPro" id="IPR007094">
    <property type="entry name" value="RNA-dir_pol_PSvirus"/>
</dbReference>
<dbReference type="InterPro" id="IPR029063">
    <property type="entry name" value="SAM-dependent_MTases_sf"/>
</dbReference>
<dbReference type="InterPro" id="IPR047311">
    <property type="entry name" value="Togaviridae_RdRp"/>
</dbReference>
<dbReference type="InterPro" id="IPR049329">
    <property type="entry name" value="ToMV_Hel_N"/>
</dbReference>
<dbReference type="Pfam" id="PF01661">
    <property type="entry name" value="Macro"/>
    <property type="match status" value="1"/>
</dbReference>
<dbReference type="Pfam" id="PF20852">
    <property type="entry name" value="nsP3_ZBD"/>
    <property type="match status" value="1"/>
</dbReference>
<dbReference type="Pfam" id="PF01707">
    <property type="entry name" value="Peptidase_C9"/>
    <property type="match status" value="1"/>
</dbReference>
<dbReference type="Pfam" id="PF00978">
    <property type="entry name" value="RdRP_2"/>
    <property type="match status" value="1"/>
</dbReference>
<dbReference type="Pfam" id="PF20896">
    <property type="entry name" value="ToMV_Hel_N"/>
    <property type="match status" value="1"/>
</dbReference>
<dbReference type="Pfam" id="PF01443">
    <property type="entry name" value="Viral_helicase1"/>
    <property type="match status" value="1"/>
</dbReference>
<dbReference type="Pfam" id="PF01660">
    <property type="entry name" value="Vmethyltransf"/>
    <property type="match status" value="1"/>
</dbReference>
<dbReference type="SMART" id="SM00506">
    <property type="entry name" value="A1pp"/>
    <property type="match status" value="1"/>
</dbReference>
<dbReference type="SUPFAM" id="SSF56672">
    <property type="entry name" value="DNA/RNA polymerases"/>
    <property type="match status" value="1"/>
</dbReference>
<dbReference type="SUPFAM" id="SSF52949">
    <property type="entry name" value="Macro domain-like"/>
    <property type="match status" value="1"/>
</dbReference>
<dbReference type="SUPFAM" id="SSF52540">
    <property type="entry name" value="P-loop containing nucleoside triphosphate hydrolases"/>
    <property type="match status" value="1"/>
</dbReference>
<dbReference type="PROSITE" id="PS51743">
    <property type="entry name" value="ALPHAVIRUS_MT"/>
    <property type="match status" value="1"/>
</dbReference>
<dbReference type="PROSITE" id="PS51154">
    <property type="entry name" value="MACRO"/>
    <property type="match status" value="1"/>
</dbReference>
<dbReference type="PROSITE" id="PS51520">
    <property type="entry name" value="NSP2PRO"/>
    <property type="match status" value="1"/>
</dbReference>
<dbReference type="PROSITE" id="PS51657">
    <property type="entry name" value="PSRV_HELICASE"/>
    <property type="match status" value="1"/>
</dbReference>
<dbReference type="PROSITE" id="PS50507">
    <property type="entry name" value="RDRP_SSRNA_POS"/>
    <property type="match status" value="1"/>
</dbReference>
<name>POLN_EEEV1</name>
<evidence type="ECO:0000250" key="1">
    <source>
        <dbReference type="UniProtKB" id="O90368"/>
    </source>
</evidence>
<evidence type="ECO:0000250" key="2">
    <source>
        <dbReference type="UniProtKB" id="P03317"/>
    </source>
</evidence>
<evidence type="ECO:0000250" key="3">
    <source>
        <dbReference type="UniProtKB" id="P08411"/>
    </source>
</evidence>
<evidence type="ECO:0000250" key="4">
    <source>
        <dbReference type="UniProtKB" id="P27282"/>
    </source>
</evidence>
<evidence type="ECO:0000250" key="5">
    <source>
        <dbReference type="UniProtKB" id="P36328"/>
    </source>
</evidence>
<evidence type="ECO:0000250" key="6">
    <source>
        <dbReference type="UniProtKB" id="Q4QXJ8"/>
    </source>
</evidence>
<evidence type="ECO:0000250" key="7">
    <source>
        <dbReference type="UniProtKB" id="Q8JUX6"/>
    </source>
</evidence>
<evidence type="ECO:0000255" key="8">
    <source>
        <dbReference type="PROSITE-ProRule" id="PRU00490"/>
    </source>
</evidence>
<evidence type="ECO:0000255" key="9">
    <source>
        <dbReference type="PROSITE-ProRule" id="PRU00539"/>
    </source>
</evidence>
<evidence type="ECO:0000255" key="10">
    <source>
        <dbReference type="PROSITE-ProRule" id="PRU00853"/>
    </source>
</evidence>
<evidence type="ECO:0000255" key="11">
    <source>
        <dbReference type="PROSITE-ProRule" id="PRU00990"/>
    </source>
</evidence>
<evidence type="ECO:0000255" key="12">
    <source>
        <dbReference type="PROSITE-ProRule" id="PRU01079"/>
    </source>
</evidence>
<evidence type="ECO:0000256" key="13">
    <source>
        <dbReference type="SAM" id="MobiDB-lite"/>
    </source>
</evidence>
<evidence type="ECO:0000305" key="14"/>
<organismHost>
    <name type="scientific">Aedes</name>
    <dbReference type="NCBI Taxonomy" id="7158"/>
</organismHost>
<organismHost>
    <name type="scientific">Homo sapiens</name>
    <name type="common">Human</name>
    <dbReference type="NCBI Taxonomy" id="9606"/>
</organismHost>
<organismHost>
    <name type="scientific">Passeriformes</name>
    <dbReference type="NCBI Taxonomy" id="9126"/>
</organismHost>